<proteinExistence type="evidence at transcript level"/>
<evidence type="ECO:0000250" key="1">
    <source>
        <dbReference type="UniProtKB" id="Q6UWZ7"/>
    </source>
</evidence>
<evidence type="ECO:0000255" key="2"/>
<evidence type="ECO:0000255" key="3">
    <source>
        <dbReference type="PROSITE-ProRule" id="PRU01182"/>
    </source>
</evidence>
<evidence type="ECO:0000256" key="4">
    <source>
        <dbReference type="SAM" id="MobiDB-lite"/>
    </source>
</evidence>
<evidence type="ECO:0000303" key="5">
    <source>
    </source>
</evidence>
<evidence type="ECO:0000305" key="6"/>
<dbReference type="EMBL" id="BX649525">
    <property type="protein sequence ID" value="CAK05015.1"/>
    <property type="molecule type" value="Genomic_DNA"/>
</dbReference>
<dbReference type="EMBL" id="BC083413">
    <property type="protein sequence ID" value="AAH83413.1"/>
    <property type="molecule type" value="mRNA"/>
</dbReference>
<dbReference type="RefSeq" id="NP_001005993.1">
    <property type="nucleotide sequence ID" value="NM_001005993.1"/>
</dbReference>
<dbReference type="SMR" id="Q1LVP6"/>
<dbReference type="FunCoup" id="Q1LVP6">
    <property type="interactions" value="949"/>
</dbReference>
<dbReference type="STRING" id="7955.ENSDARP00000063620"/>
<dbReference type="PaxDb" id="7955-ENSDARP00000063620"/>
<dbReference type="Ensembl" id="ENSDART00000063621">
    <property type="protein sequence ID" value="ENSDARP00000063620"/>
    <property type="gene ID" value="ENSDARG00000043339"/>
</dbReference>
<dbReference type="Ensembl" id="ENSDART00000184956">
    <property type="protein sequence ID" value="ENSDARP00000155024"/>
    <property type="gene ID" value="ENSDARG00000115196"/>
</dbReference>
<dbReference type="GeneID" id="449820"/>
<dbReference type="KEGG" id="dre:449820"/>
<dbReference type="AGR" id="ZFIN:ZDB-GENE-041010-70"/>
<dbReference type="CTD" id="84142"/>
<dbReference type="ZFIN" id="ZDB-GENE-041010-70">
    <property type="gene designation" value="abraxas1"/>
</dbReference>
<dbReference type="eggNOG" id="ENOG502QVCD">
    <property type="taxonomic scope" value="Eukaryota"/>
</dbReference>
<dbReference type="HOGENOM" id="CLU_056671_0_1_1"/>
<dbReference type="InParanoid" id="Q1LVP6"/>
<dbReference type="OMA" id="MEYAAFI"/>
<dbReference type="OrthoDB" id="6358435at2759"/>
<dbReference type="PhylomeDB" id="Q1LVP6"/>
<dbReference type="TreeFam" id="TF331751"/>
<dbReference type="PRO" id="PR:Q1LVP6"/>
<dbReference type="Proteomes" id="UP000000437">
    <property type="component" value="Alternate scaffold 21"/>
</dbReference>
<dbReference type="Proteomes" id="UP000000437">
    <property type="component" value="Chromosome 21"/>
</dbReference>
<dbReference type="Bgee" id="ENSDARG00000043339">
    <property type="expression patterns" value="Expressed in mature ovarian follicle and 20 other cell types or tissues"/>
</dbReference>
<dbReference type="GO" id="GO:0070531">
    <property type="term" value="C:BRCA1-A complex"/>
    <property type="evidence" value="ECO:0000250"/>
    <property type="project" value="UniProtKB"/>
</dbReference>
<dbReference type="GO" id="GO:0005634">
    <property type="term" value="C:nucleus"/>
    <property type="evidence" value="ECO:0000250"/>
    <property type="project" value="UniProtKB"/>
</dbReference>
<dbReference type="GO" id="GO:0008017">
    <property type="term" value="F:microtubule binding"/>
    <property type="evidence" value="ECO:0000318"/>
    <property type="project" value="GO_Central"/>
</dbReference>
<dbReference type="GO" id="GO:0031593">
    <property type="term" value="F:polyubiquitin modification-dependent protein binding"/>
    <property type="evidence" value="ECO:0000250"/>
    <property type="project" value="UniProtKB"/>
</dbReference>
<dbReference type="GO" id="GO:0008608">
    <property type="term" value="P:attachment of spindle microtubules to kinetochore"/>
    <property type="evidence" value="ECO:0000318"/>
    <property type="project" value="GO_Central"/>
</dbReference>
<dbReference type="GO" id="GO:0006325">
    <property type="term" value="P:chromatin organization"/>
    <property type="evidence" value="ECO:0007669"/>
    <property type="project" value="UniProtKB-KW"/>
</dbReference>
<dbReference type="GO" id="GO:0006302">
    <property type="term" value="P:double-strand break repair"/>
    <property type="evidence" value="ECO:0000250"/>
    <property type="project" value="UniProtKB"/>
</dbReference>
<dbReference type="GO" id="GO:0007095">
    <property type="term" value="P:mitotic G2 DNA damage checkpoint signaling"/>
    <property type="evidence" value="ECO:0000250"/>
    <property type="project" value="UniProtKB"/>
</dbReference>
<dbReference type="GO" id="GO:0090307">
    <property type="term" value="P:mitotic spindle assembly"/>
    <property type="evidence" value="ECO:0000318"/>
    <property type="project" value="GO_Central"/>
</dbReference>
<dbReference type="GO" id="GO:0045739">
    <property type="term" value="P:positive regulation of DNA repair"/>
    <property type="evidence" value="ECO:0000250"/>
    <property type="project" value="UniProtKB"/>
</dbReference>
<dbReference type="GO" id="GO:0010212">
    <property type="term" value="P:response to ionizing radiation"/>
    <property type="evidence" value="ECO:0000250"/>
    <property type="project" value="UniProtKB"/>
</dbReference>
<dbReference type="CDD" id="cd23523">
    <property type="entry name" value="Abraxas_1"/>
    <property type="match status" value="1"/>
</dbReference>
<dbReference type="InterPro" id="IPR023239">
    <property type="entry name" value="BRISC_Abraxas1"/>
</dbReference>
<dbReference type="InterPro" id="IPR023238">
    <property type="entry name" value="FAM175"/>
</dbReference>
<dbReference type="InterPro" id="IPR037518">
    <property type="entry name" value="MPN"/>
</dbReference>
<dbReference type="PANTHER" id="PTHR31728">
    <property type="entry name" value="ABRAXAS FAMILY MEMBER"/>
    <property type="match status" value="1"/>
</dbReference>
<dbReference type="PANTHER" id="PTHR31728:SF2">
    <property type="entry name" value="BRCA1-A COMPLEX SUBUNIT ABRAXAS 1"/>
    <property type="match status" value="1"/>
</dbReference>
<dbReference type="Pfam" id="PF21125">
    <property type="entry name" value="MPN_2A_DUB_like"/>
    <property type="match status" value="1"/>
</dbReference>
<dbReference type="PRINTS" id="PR02052">
    <property type="entry name" value="ABRAXAS"/>
</dbReference>
<dbReference type="PRINTS" id="PR02051">
    <property type="entry name" value="PROTEINF175"/>
</dbReference>
<dbReference type="PROSITE" id="PS50249">
    <property type="entry name" value="MPN"/>
    <property type="match status" value="1"/>
</dbReference>
<gene>
    <name evidence="1" type="primary">abraxas1</name>
    <name type="synonym">abra1</name>
    <name type="synonym">ccdc98</name>
    <name type="synonym">fam175a</name>
    <name type="ORF">si:ch211-85e10.4</name>
    <name type="ORF">zgc:103522</name>
</gene>
<name>ABRX1_DANRE</name>
<feature type="chain" id="PRO_0000278578" description="BRCA1-A complex subunit Abraxas 1">
    <location>
        <begin position="1"/>
        <end position="391"/>
    </location>
</feature>
<feature type="domain" description="MPN" evidence="3">
    <location>
        <begin position="8"/>
        <end position="156"/>
    </location>
</feature>
<feature type="region of interest" description="Disordered" evidence="4">
    <location>
        <begin position="354"/>
        <end position="391"/>
    </location>
</feature>
<feature type="coiled-coil region" evidence="2">
    <location>
        <begin position="223"/>
        <end position="261"/>
    </location>
</feature>
<feature type="short sequence motif" description="pSXXF motif" evidence="6">
    <location>
        <begin position="388"/>
        <end position="391"/>
    </location>
</feature>
<feature type="compositionally biased region" description="Polar residues" evidence="4">
    <location>
        <begin position="367"/>
        <end position="391"/>
    </location>
</feature>
<feature type="modified residue" description="Phosphoserine" evidence="1">
    <location>
        <position position="388"/>
    </location>
</feature>
<feature type="sequence conflict" description="In Ref. 2; AAH83413." evidence="6" ref="2">
    <original>S</original>
    <variation>G</variation>
    <location>
        <position position="185"/>
    </location>
</feature>
<sequence>MEEFNTTVRISGFVLSSLMFHHLNSDADVEGLILGESVGEENCRITDSQIDHIQFEHTLNIQKHIPCHKLHSFYSNVGDVSEQKIRQILSDYKEENVIGWYRQRRNTRQQMTFMEQVIHRNMRKILSNQELVFMLLTPSQGTASGSTHRLEFSAFIWHSSQYINIPISVSNLGNLEQQDYWRVSSTCPSLGQSQAVNQHRAKFFCSGDDLREVRNVSDMNDALLAEMQKVCVEVEKSERTVEKLQEDIAQLKEAIGKQKTHPEEHETPISACPEEPKENTLLCSALRTLFPSVPSLRTQTLTVHGFPVLQLCCNTDHNIDISTKLPQILENQHSRRKVTAPRLRKKCLVASFPQRLKRKRKTREVSESASESGSDTEIEMNGQSGSNSPVF</sequence>
<comment type="function">
    <text evidence="1">Involved in DNA damage response and double-strand break (DSB) repair. Component of the BRCA1-A complex, acting as a central scaffold protein that assembles the various components of the complex. The BRCA1-A complex specifically recognizes 'Lys-63'-linked ubiquitinated histones H2A and H2AX at DNA lesion sites. This complex also possesses deubiquitinase activity that specifically removes 'Lys-63'-linked ubiquitin on histones H2A and H2AX (By similarity).</text>
</comment>
<comment type="subunit">
    <text evidence="1">Component of the ARISC complex. Component of the BRCA1-A complex. Homodimer (By similarity).</text>
</comment>
<comment type="subcellular location">
    <subcellularLocation>
        <location evidence="1">Nucleus</location>
    </subcellularLocation>
    <text evidence="1">Localizes at sites of DNA damage at double-strand breaks (DSBs).</text>
</comment>
<comment type="PTM">
    <text evidence="1">Phosphorylation of Ser-388 of the pSXXF motif by ATM or ATR constitutes a specific recognition motif for the BRCT domain of BRCA1.</text>
</comment>
<comment type="similarity">
    <text evidence="6">Belongs to the FAM175 family. Abraxas subfamily.</text>
</comment>
<comment type="caution">
    <text evidence="5 6">There is no annotated ortholog of the vertebrate gene BRCA1 in the current zebrafish genome (PubMed:23594743). Therefore, mentions of brca1 in relevant curated zebrafish entries have been removed. However some complexes, conserved widely across species, have BRCA1 in their name and so have been left unchanged.</text>
</comment>
<reference key="1">
    <citation type="journal article" date="2013" name="Nature">
        <title>The zebrafish reference genome sequence and its relationship to the human genome.</title>
        <authorList>
            <person name="Howe K."/>
            <person name="Clark M.D."/>
            <person name="Torroja C.F."/>
            <person name="Torrance J."/>
            <person name="Berthelot C."/>
            <person name="Muffato M."/>
            <person name="Collins J.E."/>
            <person name="Humphray S."/>
            <person name="McLaren K."/>
            <person name="Matthews L."/>
            <person name="McLaren S."/>
            <person name="Sealy I."/>
            <person name="Caccamo M."/>
            <person name="Churcher C."/>
            <person name="Scott C."/>
            <person name="Barrett J.C."/>
            <person name="Koch R."/>
            <person name="Rauch G.J."/>
            <person name="White S."/>
            <person name="Chow W."/>
            <person name="Kilian B."/>
            <person name="Quintais L.T."/>
            <person name="Guerra-Assuncao J.A."/>
            <person name="Zhou Y."/>
            <person name="Gu Y."/>
            <person name="Yen J."/>
            <person name="Vogel J.H."/>
            <person name="Eyre T."/>
            <person name="Redmond S."/>
            <person name="Banerjee R."/>
            <person name="Chi J."/>
            <person name="Fu B."/>
            <person name="Langley E."/>
            <person name="Maguire S.F."/>
            <person name="Laird G.K."/>
            <person name="Lloyd D."/>
            <person name="Kenyon E."/>
            <person name="Donaldson S."/>
            <person name="Sehra H."/>
            <person name="Almeida-King J."/>
            <person name="Loveland J."/>
            <person name="Trevanion S."/>
            <person name="Jones M."/>
            <person name="Quail M."/>
            <person name="Willey D."/>
            <person name="Hunt A."/>
            <person name="Burton J."/>
            <person name="Sims S."/>
            <person name="McLay K."/>
            <person name="Plumb B."/>
            <person name="Davis J."/>
            <person name="Clee C."/>
            <person name="Oliver K."/>
            <person name="Clark R."/>
            <person name="Riddle C."/>
            <person name="Elliot D."/>
            <person name="Threadgold G."/>
            <person name="Harden G."/>
            <person name="Ware D."/>
            <person name="Begum S."/>
            <person name="Mortimore B."/>
            <person name="Kerry G."/>
            <person name="Heath P."/>
            <person name="Phillimore B."/>
            <person name="Tracey A."/>
            <person name="Corby N."/>
            <person name="Dunn M."/>
            <person name="Johnson C."/>
            <person name="Wood J."/>
            <person name="Clark S."/>
            <person name="Pelan S."/>
            <person name="Griffiths G."/>
            <person name="Smith M."/>
            <person name="Glithero R."/>
            <person name="Howden P."/>
            <person name="Barker N."/>
            <person name="Lloyd C."/>
            <person name="Stevens C."/>
            <person name="Harley J."/>
            <person name="Holt K."/>
            <person name="Panagiotidis G."/>
            <person name="Lovell J."/>
            <person name="Beasley H."/>
            <person name="Henderson C."/>
            <person name="Gordon D."/>
            <person name="Auger K."/>
            <person name="Wright D."/>
            <person name="Collins J."/>
            <person name="Raisen C."/>
            <person name="Dyer L."/>
            <person name="Leung K."/>
            <person name="Robertson L."/>
            <person name="Ambridge K."/>
            <person name="Leongamornlert D."/>
            <person name="McGuire S."/>
            <person name="Gilderthorp R."/>
            <person name="Griffiths C."/>
            <person name="Manthravadi D."/>
            <person name="Nichol S."/>
            <person name="Barker G."/>
            <person name="Whitehead S."/>
            <person name="Kay M."/>
            <person name="Brown J."/>
            <person name="Murnane C."/>
            <person name="Gray E."/>
            <person name="Humphries M."/>
            <person name="Sycamore N."/>
            <person name="Barker D."/>
            <person name="Saunders D."/>
            <person name="Wallis J."/>
            <person name="Babbage A."/>
            <person name="Hammond S."/>
            <person name="Mashreghi-Mohammadi M."/>
            <person name="Barr L."/>
            <person name="Martin S."/>
            <person name="Wray P."/>
            <person name="Ellington A."/>
            <person name="Matthews N."/>
            <person name="Ellwood M."/>
            <person name="Woodmansey R."/>
            <person name="Clark G."/>
            <person name="Cooper J."/>
            <person name="Tromans A."/>
            <person name="Grafham D."/>
            <person name="Skuce C."/>
            <person name="Pandian R."/>
            <person name="Andrews R."/>
            <person name="Harrison E."/>
            <person name="Kimberley A."/>
            <person name="Garnett J."/>
            <person name="Fosker N."/>
            <person name="Hall R."/>
            <person name="Garner P."/>
            <person name="Kelly D."/>
            <person name="Bird C."/>
            <person name="Palmer S."/>
            <person name="Gehring I."/>
            <person name="Berger A."/>
            <person name="Dooley C.M."/>
            <person name="Ersan-Urun Z."/>
            <person name="Eser C."/>
            <person name="Geiger H."/>
            <person name="Geisler M."/>
            <person name="Karotki L."/>
            <person name="Kirn A."/>
            <person name="Konantz J."/>
            <person name="Konantz M."/>
            <person name="Oberlander M."/>
            <person name="Rudolph-Geiger S."/>
            <person name="Teucke M."/>
            <person name="Lanz C."/>
            <person name="Raddatz G."/>
            <person name="Osoegawa K."/>
            <person name="Zhu B."/>
            <person name="Rapp A."/>
            <person name="Widaa S."/>
            <person name="Langford C."/>
            <person name="Yang F."/>
            <person name="Schuster S.C."/>
            <person name="Carter N.P."/>
            <person name="Harrow J."/>
            <person name="Ning Z."/>
            <person name="Herrero J."/>
            <person name="Searle S.M."/>
            <person name="Enright A."/>
            <person name="Geisler R."/>
            <person name="Plasterk R.H."/>
            <person name="Lee C."/>
            <person name="Westerfield M."/>
            <person name="de Jong P.J."/>
            <person name="Zon L.I."/>
            <person name="Postlethwait J.H."/>
            <person name="Nusslein-Volhard C."/>
            <person name="Hubbard T.J."/>
            <person name="Roest Crollius H."/>
            <person name="Rogers J."/>
            <person name="Stemple D.L."/>
        </authorList>
    </citation>
    <scope>NUCLEOTIDE SEQUENCE [LARGE SCALE GENOMIC DNA]</scope>
    <scope>NOMENCLATURE</scope>
    <source>
        <strain>Tuebingen</strain>
    </source>
</reference>
<reference key="2">
    <citation type="submission" date="2004-10" db="EMBL/GenBank/DDBJ databases">
        <authorList>
            <consortium name="NIH - Zebrafish Gene Collection (ZGC) project"/>
        </authorList>
    </citation>
    <scope>NUCLEOTIDE SEQUENCE [LARGE SCALE MRNA]</scope>
    <source>
        <tissue>Ovary</tissue>
    </source>
</reference>
<keyword id="KW-0156">Chromatin regulator</keyword>
<keyword id="KW-0175">Coiled coil</keyword>
<keyword id="KW-0227">DNA damage</keyword>
<keyword id="KW-0234">DNA repair</keyword>
<keyword id="KW-0539">Nucleus</keyword>
<keyword id="KW-0597">Phosphoprotein</keyword>
<keyword id="KW-1185">Reference proteome</keyword>
<accession>Q1LVP6</accession>
<accession>Q5XJ91</accession>
<protein>
    <recommendedName>
        <fullName evidence="1">BRCA1-A complex subunit Abraxas 1</fullName>
    </recommendedName>
    <alternativeName>
        <fullName>Coiled-coil domain-containing protein 98</fullName>
    </alternativeName>
    <alternativeName>
        <fullName>Protein FAM175A</fullName>
    </alternativeName>
</protein>
<organism>
    <name type="scientific">Danio rerio</name>
    <name type="common">Zebrafish</name>
    <name type="synonym">Brachydanio rerio</name>
    <dbReference type="NCBI Taxonomy" id="7955"/>
    <lineage>
        <taxon>Eukaryota</taxon>
        <taxon>Metazoa</taxon>
        <taxon>Chordata</taxon>
        <taxon>Craniata</taxon>
        <taxon>Vertebrata</taxon>
        <taxon>Euteleostomi</taxon>
        <taxon>Actinopterygii</taxon>
        <taxon>Neopterygii</taxon>
        <taxon>Teleostei</taxon>
        <taxon>Ostariophysi</taxon>
        <taxon>Cypriniformes</taxon>
        <taxon>Danionidae</taxon>
        <taxon>Danioninae</taxon>
        <taxon>Danio</taxon>
    </lineage>
</organism>